<dbReference type="EMBL" id="AF080066">
    <property type="protein sequence ID" value="AAD19339.1"/>
    <property type="molecule type" value="mRNA"/>
</dbReference>
<dbReference type="SMR" id="Q9Z0Z6"/>
<dbReference type="GlyCosmos" id="Q9Z0Z6">
    <property type="glycosylation" value="4 sites, No reported glycans"/>
</dbReference>
<dbReference type="Ensembl" id="ENSMUGT00000009209">
    <property type="protein sequence ID" value="ENSMUGP00000007795"/>
    <property type="gene ID" value="ENSMUGG00000007071"/>
</dbReference>
<dbReference type="OrthoDB" id="8804420at2759"/>
<dbReference type="GO" id="GO:0009897">
    <property type="term" value="C:external side of plasma membrane"/>
    <property type="evidence" value="ECO:0007669"/>
    <property type="project" value="TreeGrafter"/>
</dbReference>
<dbReference type="GO" id="GO:0004945">
    <property type="term" value="F:angiotensin type II receptor activity"/>
    <property type="evidence" value="ECO:0000250"/>
    <property type="project" value="UniProtKB"/>
</dbReference>
<dbReference type="GO" id="GO:0019957">
    <property type="term" value="F:C-C chemokine binding"/>
    <property type="evidence" value="ECO:0007669"/>
    <property type="project" value="TreeGrafter"/>
</dbReference>
<dbReference type="GO" id="GO:0016493">
    <property type="term" value="F:C-C chemokine receptor activity"/>
    <property type="evidence" value="ECO:0007669"/>
    <property type="project" value="TreeGrafter"/>
</dbReference>
<dbReference type="GO" id="GO:0097746">
    <property type="term" value="P:blood vessel diameter maintenance"/>
    <property type="evidence" value="ECO:0007669"/>
    <property type="project" value="InterPro"/>
</dbReference>
<dbReference type="GO" id="GO:0019722">
    <property type="term" value="P:calcium-mediated signaling"/>
    <property type="evidence" value="ECO:0007669"/>
    <property type="project" value="TreeGrafter"/>
</dbReference>
<dbReference type="GO" id="GO:0006955">
    <property type="term" value="P:immune response"/>
    <property type="evidence" value="ECO:0007669"/>
    <property type="project" value="TreeGrafter"/>
</dbReference>
<dbReference type="GO" id="GO:0006954">
    <property type="term" value="P:inflammatory response"/>
    <property type="evidence" value="ECO:0007669"/>
    <property type="project" value="InterPro"/>
</dbReference>
<dbReference type="GO" id="GO:0030593">
    <property type="term" value="P:neutrophil chemotaxis"/>
    <property type="evidence" value="ECO:0007669"/>
    <property type="project" value="TreeGrafter"/>
</dbReference>
<dbReference type="GO" id="GO:0007204">
    <property type="term" value="P:positive regulation of cytosolic calcium ion concentration"/>
    <property type="evidence" value="ECO:0007669"/>
    <property type="project" value="TreeGrafter"/>
</dbReference>
<dbReference type="GO" id="GO:0042981">
    <property type="term" value="P:regulation of apoptotic process"/>
    <property type="evidence" value="ECO:0007669"/>
    <property type="project" value="InterPro"/>
</dbReference>
<dbReference type="CDD" id="cd15191">
    <property type="entry name" value="7tmA_AT2R"/>
    <property type="match status" value="1"/>
</dbReference>
<dbReference type="FunFam" id="1.20.1070.10:FF:000161">
    <property type="entry name" value="type-2 angiotensin II receptor"/>
    <property type="match status" value="1"/>
</dbReference>
<dbReference type="Gene3D" id="1.20.1070.10">
    <property type="entry name" value="Rhodopsin 7-helix transmembrane proteins"/>
    <property type="match status" value="1"/>
</dbReference>
<dbReference type="InterPro" id="IPR000147">
    <property type="entry name" value="ATII_AT2_rcpt"/>
</dbReference>
<dbReference type="InterPro" id="IPR000248">
    <property type="entry name" value="ATII_rcpt"/>
</dbReference>
<dbReference type="InterPro" id="IPR050119">
    <property type="entry name" value="CCR1-9-like"/>
</dbReference>
<dbReference type="InterPro" id="IPR000276">
    <property type="entry name" value="GPCR_Rhodpsn"/>
</dbReference>
<dbReference type="InterPro" id="IPR017452">
    <property type="entry name" value="GPCR_Rhodpsn_7TM"/>
</dbReference>
<dbReference type="PANTHER" id="PTHR10489">
    <property type="entry name" value="CELL ADHESION MOLECULE"/>
    <property type="match status" value="1"/>
</dbReference>
<dbReference type="PANTHER" id="PTHR10489:SF952">
    <property type="entry name" value="TYPE-2 ANGIOTENSIN II RECEPTOR"/>
    <property type="match status" value="1"/>
</dbReference>
<dbReference type="Pfam" id="PF00001">
    <property type="entry name" value="7tm_1"/>
    <property type="match status" value="1"/>
</dbReference>
<dbReference type="PRINTS" id="PR00241">
    <property type="entry name" value="ANGIOTENSINR"/>
</dbReference>
<dbReference type="PRINTS" id="PR00636">
    <property type="entry name" value="ANGIOTENSN2R"/>
</dbReference>
<dbReference type="PRINTS" id="PR00237">
    <property type="entry name" value="GPCRRHODOPSN"/>
</dbReference>
<dbReference type="SUPFAM" id="SSF81321">
    <property type="entry name" value="Family A G protein-coupled receptor-like"/>
    <property type="match status" value="1"/>
</dbReference>
<dbReference type="PROSITE" id="PS00237">
    <property type="entry name" value="G_PROTEIN_RECEP_F1_1"/>
    <property type="match status" value="1"/>
</dbReference>
<dbReference type="PROSITE" id="PS50262">
    <property type="entry name" value="G_PROTEIN_RECEP_F1_2"/>
    <property type="match status" value="1"/>
</dbReference>
<feature type="chain" id="PRO_0000069168" description="Type-2 angiotensin II receptor">
    <location>
        <begin position="1"/>
        <end position="363"/>
    </location>
</feature>
<feature type="topological domain" description="Extracellular" evidence="2">
    <location>
        <begin position="1"/>
        <end position="45"/>
    </location>
</feature>
<feature type="transmembrane region" description="Helical; Name=1" evidence="2">
    <location>
        <begin position="46"/>
        <end position="70"/>
    </location>
</feature>
<feature type="topological domain" description="Cytoplasmic" evidence="2">
    <location>
        <begin position="71"/>
        <end position="80"/>
    </location>
</feature>
<feature type="transmembrane region" description="Helical; Name=2" evidence="2">
    <location>
        <begin position="81"/>
        <end position="104"/>
    </location>
</feature>
<feature type="topological domain" description="Extracellular" evidence="2">
    <location>
        <begin position="105"/>
        <end position="114"/>
    </location>
</feature>
<feature type="transmembrane region" description="Helical; Name=3" evidence="2">
    <location>
        <begin position="115"/>
        <end position="140"/>
    </location>
</feature>
<feature type="topological domain" description="Cytoplasmic" evidence="2">
    <location>
        <begin position="141"/>
        <end position="159"/>
    </location>
</feature>
<feature type="transmembrane region" description="Helical; Name=4" evidence="2">
    <location>
        <begin position="160"/>
        <end position="181"/>
    </location>
</feature>
<feature type="topological domain" description="Extracellular" evidence="2">
    <location>
        <begin position="182"/>
        <end position="206"/>
    </location>
</feature>
<feature type="transmembrane region" description="Helical; Name=5" evidence="2">
    <location>
        <begin position="207"/>
        <end position="232"/>
    </location>
</feature>
<feature type="topological domain" description="Cytoplasmic" evidence="2">
    <location>
        <begin position="233"/>
        <end position="257"/>
    </location>
</feature>
<feature type="transmembrane region" description="Helical; Name=6" evidence="2">
    <location>
        <begin position="258"/>
        <end position="281"/>
    </location>
</feature>
<feature type="topological domain" description="Extracellular" evidence="2">
    <location>
        <begin position="282"/>
        <end position="294"/>
    </location>
</feature>
<feature type="transmembrane region" description="Helical; Name=7" evidence="2">
    <location>
        <begin position="295"/>
        <end position="320"/>
    </location>
</feature>
<feature type="topological domain" description="Cytoplasmic" evidence="2">
    <location>
        <begin position="321"/>
        <end position="363"/>
    </location>
</feature>
<feature type="region of interest" description="Helix VIII" evidence="2">
    <location>
        <begin position="324"/>
        <end position="333"/>
    </location>
</feature>
<feature type="binding site" evidence="2">
    <location>
        <position position="103"/>
    </location>
    <ligand>
        <name>angiotensin II</name>
        <dbReference type="ChEBI" id="CHEBI:58506"/>
    </ligand>
</feature>
<feature type="binding site" evidence="2">
    <location>
        <position position="104"/>
    </location>
    <ligand>
        <name>angiotensin II</name>
        <dbReference type="ChEBI" id="CHEBI:58506"/>
    </ligand>
</feature>
<feature type="binding site" evidence="2">
    <location>
        <position position="182"/>
    </location>
    <ligand>
        <name>angiotensin II</name>
        <dbReference type="ChEBI" id="CHEBI:58506"/>
    </ligand>
</feature>
<feature type="binding site" evidence="2">
    <location>
        <position position="204"/>
    </location>
    <ligand>
        <name>angiotensin II</name>
        <dbReference type="ChEBI" id="CHEBI:58506"/>
    </ligand>
</feature>
<feature type="binding site" evidence="2">
    <location>
        <position position="215"/>
    </location>
    <ligand>
        <name>angiotensin II</name>
        <dbReference type="ChEBI" id="CHEBI:58506"/>
    </ligand>
</feature>
<feature type="binding site" evidence="2">
    <location>
        <position position="279"/>
    </location>
    <ligand>
        <name>angiotensin II</name>
        <dbReference type="ChEBI" id="CHEBI:58506"/>
    </ligand>
</feature>
<feature type="binding site" evidence="2">
    <location>
        <position position="297"/>
    </location>
    <ligand>
        <name>angiotensin II</name>
        <dbReference type="ChEBI" id="CHEBI:58506"/>
    </ligand>
</feature>
<feature type="modified residue" description="Phosphoserine; by PKC" evidence="3">
    <location>
        <position position="354"/>
    </location>
</feature>
<feature type="glycosylation site" description="N-linked (GlcNAc...) asparagine" evidence="3">
    <location>
        <position position="4"/>
    </location>
</feature>
<feature type="glycosylation site" description="N-linked (GlcNAc...) asparagine" evidence="3">
    <location>
        <position position="13"/>
    </location>
</feature>
<feature type="glycosylation site" description="N-linked (GlcNAc...) asparagine" evidence="3">
    <location>
        <position position="24"/>
    </location>
</feature>
<feature type="glycosylation site" description="N-linked (GlcNAc...) asparagine" evidence="3">
    <location>
        <position position="34"/>
    </location>
</feature>
<feature type="disulfide bond" evidence="4">
    <location>
        <begin position="35"/>
        <end position="290"/>
    </location>
</feature>
<feature type="disulfide bond" evidence="4">
    <location>
        <begin position="117"/>
        <end position="195"/>
    </location>
</feature>
<gene>
    <name type="primary">AGTR2</name>
</gene>
<protein>
    <recommendedName>
        <fullName>Type-2 angiotensin II receptor</fullName>
    </recommendedName>
    <alternativeName>
        <fullName>Angiotensin II type-2 receptor</fullName>
        <shortName evidence="5">AT2 receptor</shortName>
    </alternativeName>
</protein>
<proteinExistence type="evidence at transcript level"/>
<accession>Q9Z0Z6</accession>
<name>AGTR2_MERUN</name>
<evidence type="ECO:0000250" key="1">
    <source>
        <dbReference type="UniProtKB" id="P35374"/>
    </source>
</evidence>
<evidence type="ECO:0000250" key="2">
    <source>
        <dbReference type="UniProtKB" id="P50052"/>
    </source>
</evidence>
<evidence type="ECO:0000255" key="3"/>
<evidence type="ECO:0000255" key="4">
    <source>
        <dbReference type="PROSITE-ProRule" id="PRU00521"/>
    </source>
</evidence>
<evidence type="ECO:0000303" key="5">
    <source>
    </source>
</evidence>
<organism>
    <name type="scientific">Meriones unguiculatus</name>
    <name type="common">Mongolian jird</name>
    <name type="synonym">Gerbillus unguiculatus</name>
    <dbReference type="NCBI Taxonomy" id="10047"/>
    <lineage>
        <taxon>Eukaryota</taxon>
        <taxon>Metazoa</taxon>
        <taxon>Chordata</taxon>
        <taxon>Craniata</taxon>
        <taxon>Vertebrata</taxon>
        <taxon>Euteleostomi</taxon>
        <taxon>Mammalia</taxon>
        <taxon>Eutheria</taxon>
        <taxon>Euarchontoglires</taxon>
        <taxon>Glires</taxon>
        <taxon>Rodentia</taxon>
        <taxon>Myomorpha</taxon>
        <taxon>Muroidea</taxon>
        <taxon>Muridae</taxon>
        <taxon>Gerbillinae</taxon>
        <taxon>Meriones</taxon>
    </lineage>
</organism>
<comment type="function">
    <text evidence="2">Receptor for angiotensin II, a vasoconstricting peptide. Signals primarily via a non-canonical G-protein- and beta-arrestin independent pathways. Cooperates with MTUS1 to inhibit ERK2 activation and cell proliferation.</text>
</comment>
<comment type="subunit">
    <text evidence="2">Interacts with MTUS1.</text>
</comment>
<comment type="subcellular location">
    <subcellularLocation>
        <location evidence="1">Cell membrane</location>
        <topology evidence="2">Multi-pass membrane protein</topology>
    </subcellularLocation>
</comment>
<comment type="domain">
    <text evidence="2">Helix VIII may act as a gatekeeper for either suppression or activation of the receptor, depending on post-translational modifications and interactions with various receptor partners. Helix VIII is found in a non-canonical position, stabilizing the active-like state, but at the same time preventing the recruitment of G-proteins or beta-arrestins. Upon switching to a membrane-bound conformation, helix VIII can support the recruitment of G proteins and beta-arrestins.</text>
</comment>
<comment type="similarity">
    <text evidence="4">Belongs to the G-protein coupled receptor 1 family.</text>
</comment>
<reference key="1">
    <citation type="journal article" date="2003" name="Am. J. Physiol.">
        <title>Molecular cloning, characterization, and distribution of the gerbil angiotensin II AT2 receptor.</title>
        <authorList>
            <person name="Hoe K.-L."/>
            <person name="Armando I."/>
            <person name="Baiardi G."/>
            <person name="Sreenath T."/>
            <person name="Kulkarni A."/>
            <person name="Martinez A."/>
            <person name="Saavedra J.M."/>
        </authorList>
    </citation>
    <scope>NUCLEOTIDE SEQUENCE [MRNA]</scope>
    <source>
        <tissue>Adrenal gland</tissue>
    </source>
</reference>
<keyword id="KW-1003">Cell membrane</keyword>
<keyword id="KW-1015">Disulfide bond</keyword>
<keyword id="KW-0297">G-protein coupled receptor</keyword>
<keyword id="KW-0325">Glycoprotein</keyword>
<keyword id="KW-0472">Membrane</keyword>
<keyword id="KW-0597">Phosphoprotein</keyword>
<keyword id="KW-0675">Receptor</keyword>
<keyword id="KW-0807">Transducer</keyword>
<keyword id="KW-0812">Transmembrane</keyword>
<keyword id="KW-1133">Transmembrane helix</keyword>
<sequence>MKDNFSFAATSRNITSSLPFVNLNMSGTNDLIFNCSHKPSDKHLEAIPVLYYLIFVIGFAVNIIVVSLFCCQKGPKKVSSIYIFNLAVADLLLLATLPLWATYYSYRYDWLFGPVMCKVFGSFLTLNMFASIFFITCMSVDRYQSVIYPFLSQRRNPWQASYVVPLVWCMACLSSLPTFYFRDVRTIEYLGVNACVMAFPPEKYAQWSAGIALMKNVLGFIIPLIFIATCYFGIRKHLLKTNSYGKNRITRDQVLKMAAAVVLAFIICWLPFHVLTFLDALSWMGIINSCEVMAVIDLALPFAILLGFTNSCVNPFLYCFVGNRFQQKLRSMFRVPITWLQGKRETMSCRKSSSLREMDTFVS</sequence>